<organism>
    <name type="scientific">Shewanella sp. (strain ANA-3)</name>
    <dbReference type="NCBI Taxonomy" id="94122"/>
    <lineage>
        <taxon>Bacteria</taxon>
        <taxon>Pseudomonadati</taxon>
        <taxon>Pseudomonadota</taxon>
        <taxon>Gammaproteobacteria</taxon>
        <taxon>Alteromonadales</taxon>
        <taxon>Shewanellaceae</taxon>
        <taxon>Shewanella</taxon>
    </lineage>
</organism>
<proteinExistence type="inferred from homology"/>
<dbReference type="EC" id="7.-.-.-" evidence="1"/>
<dbReference type="EMBL" id="CP000469">
    <property type="protein sequence ID" value="ABK48401.1"/>
    <property type="molecule type" value="Genomic_DNA"/>
</dbReference>
<dbReference type="RefSeq" id="WP_011717124.1">
    <property type="nucleotide sequence ID" value="NC_008577.1"/>
</dbReference>
<dbReference type="SMR" id="A0KX82"/>
<dbReference type="STRING" id="94122.Shewana3_2171"/>
<dbReference type="KEGG" id="shn:Shewana3_2171"/>
<dbReference type="eggNOG" id="COG4658">
    <property type="taxonomic scope" value="Bacteria"/>
</dbReference>
<dbReference type="HOGENOM" id="CLU_042020_0_0_6"/>
<dbReference type="OrthoDB" id="9776359at2"/>
<dbReference type="Proteomes" id="UP000002589">
    <property type="component" value="Chromosome"/>
</dbReference>
<dbReference type="GO" id="GO:0005886">
    <property type="term" value="C:plasma membrane"/>
    <property type="evidence" value="ECO:0007669"/>
    <property type="project" value="UniProtKB-SubCell"/>
</dbReference>
<dbReference type="GO" id="GO:0022900">
    <property type="term" value="P:electron transport chain"/>
    <property type="evidence" value="ECO:0007669"/>
    <property type="project" value="UniProtKB-UniRule"/>
</dbReference>
<dbReference type="GO" id="GO:0055085">
    <property type="term" value="P:transmembrane transport"/>
    <property type="evidence" value="ECO:0007669"/>
    <property type="project" value="InterPro"/>
</dbReference>
<dbReference type="HAMAP" id="MF_00462">
    <property type="entry name" value="RsxD_RnfD"/>
    <property type="match status" value="1"/>
</dbReference>
<dbReference type="InterPro" id="IPR004338">
    <property type="entry name" value="NqrB/RnfD"/>
</dbReference>
<dbReference type="InterPro" id="IPR011303">
    <property type="entry name" value="RnfD_bac"/>
</dbReference>
<dbReference type="NCBIfam" id="NF002011">
    <property type="entry name" value="PRK00816.1"/>
    <property type="match status" value="1"/>
</dbReference>
<dbReference type="NCBIfam" id="TIGR01946">
    <property type="entry name" value="rnfD"/>
    <property type="match status" value="1"/>
</dbReference>
<dbReference type="PANTHER" id="PTHR30578">
    <property type="entry name" value="ELECTRON TRANSPORT COMPLEX PROTEIN RNFD"/>
    <property type="match status" value="1"/>
</dbReference>
<dbReference type="PANTHER" id="PTHR30578:SF0">
    <property type="entry name" value="ION-TRANSLOCATING OXIDOREDUCTASE COMPLEX SUBUNIT D"/>
    <property type="match status" value="1"/>
</dbReference>
<dbReference type="Pfam" id="PF03116">
    <property type="entry name" value="NQR2_RnfD_RnfE"/>
    <property type="match status" value="1"/>
</dbReference>
<name>RNFD_SHESA</name>
<comment type="function">
    <text evidence="1">Part of a membrane-bound complex that couples electron transfer with translocation of ions across the membrane.</text>
</comment>
<comment type="cofactor">
    <cofactor evidence="1">
        <name>FMN</name>
        <dbReference type="ChEBI" id="CHEBI:58210"/>
    </cofactor>
</comment>
<comment type="subunit">
    <text evidence="1">The complex is composed of six subunits: RnfA, RnfB, RnfC, RnfD, RnfE and RnfG.</text>
</comment>
<comment type="subcellular location">
    <subcellularLocation>
        <location evidence="1">Cell inner membrane</location>
        <topology evidence="1">Multi-pass membrane protein</topology>
    </subcellularLocation>
</comment>
<comment type="similarity">
    <text evidence="1">Belongs to the NqrB/RnfD family.</text>
</comment>
<evidence type="ECO:0000255" key="1">
    <source>
        <dbReference type="HAMAP-Rule" id="MF_00462"/>
    </source>
</evidence>
<gene>
    <name evidence="1" type="primary">rnfD</name>
    <name type="ordered locus">Shewana3_2171</name>
</gene>
<reference key="1">
    <citation type="submission" date="2006-09" db="EMBL/GenBank/DDBJ databases">
        <title>Complete sequence of chromosome 1 of Shewanella sp. ANA-3.</title>
        <authorList>
            <person name="Copeland A."/>
            <person name="Lucas S."/>
            <person name="Lapidus A."/>
            <person name="Barry K."/>
            <person name="Detter J.C."/>
            <person name="Glavina del Rio T."/>
            <person name="Hammon N."/>
            <person name="Israni S."/>
            <person name="Dalin E."/>
            <person name="Tice H."/>
            <person name="Pitluck S."/>
            <person name="Chertkov O."/>
            <person name="Brettin T."/>
            <person name="Bruce D."/>
            <person name="Han C."/>
            <person name="Tapia R."/>
            <person name="Gilna P."/>
            <person name="Schmutz J."/>
            <person name="Larimer F."/>
            <person name="Land M."/>
            <person name="Hauser L."/>
            <person name="Kyrpides N."/>
            <person name="Kim E."/>
            <person name="Newman D."/>
            <person name="Salticov C."/>
            <person name="Konstantinidis K."/>
            <person name="Klappenback J."/>
            <person name="Tiedje J."/>
            <person name="Richardson P."/>
        </authorList>
    </citation>
    <scope>NUCLEOTIDE SEQUENCE [LARGE SCALE GENOMIC DNA]</scope>
    <source>
        <strain>ANA-3</strain>
    </source>
</reference>
<keyword id="KW-0997">Cell inner membrane</keyword>
<keyword id="KW-1003">Cell membrane</keyword>
<keyword id="KW-0249">Electron transport</keyword>
<keyword id="KW-0285">Flavoprotein</keyword>
<keyword id="KW-0288">FMN</keyword>
<keyword id="KW-0472">Membrane</keyword>
<keyword id="KW-0597">Phosphoprotein</keyword>
<keyword id="KW-1278">Translocase</keyword>
<keyword id="KW-0812">Transmembrane</keyword>
<keyword id="KW-1133">Transmembrane helix</keyword>
<keyword id="KW-0813">Transport</keyword>
<accession>A0KX82</accession>
<feature type="chain" id="PRO_1000013630" description="Ion-translocating oxidoreductase complex subunit D">
    <location>
        <begin position="1"/>
        <end position="349"/>
    </location>
</feature>
<feature type="transmembrane region" description="Helical" evidence="1">
    <location>
        <begin position="36"/>
        <end position="56"/>
    </location>
</feature>
<feature type="transmembrane region" description="Helical" evidence="1">
    <location>
        <begin position="77"/>
        <end position="99"/>
    </location>
</feature>
<feature type="transmembrane region" description="Helical" evidence="1">
    <location>
        <begin position="124"/>
        <end position="144"/>
    </location>
</feature>
<feature type="transmembrane region" description="Helical" evidence="1">
    <location>
        <begin position="212"/>
        <end position="232"/>
    </location>
</feature>
<feature type="transmembrane region" description="Helical" evidence="1">
    <location>
        <begin position="239"/>
        <end position="259"/>
    </location>
</feature>
<feature type="transmembrane region" description="Helical" evidence="1">
    <location>
        <begin position="265"/>
        <end position="285"/>
    </location>
</feature>
<feature type="transmembrane region" description="Helical" evidence="1">
    <location>
        <begin position="291"/>
        <end position="311"/>
    </location>
</feature>
<feature type="transmembrane region" description="Helical" evidence="1">
    <location>
        <begin position="315"/>
        <end position="335"/>
    </location>
</feature>
<feature type="modified residue" description="FMN phosphoryl threonine" evidence="1">
    <location>
        <position position="185"/>
    </location>
</feature>
<sequence>MAFKIASSPHVTRNLHTSTVMQRVILCLLPGLVVQCAFFGWGTLIQVLLAIIVALSCEAAVMKLRNRSIKASLSDNSAMLTAILIGVAIPPLAPWWMIVMGTVFAIVIVKHLYGGLGHNLFNPAMAAYVLLLVSFPVQMTSWIAPSTVALNTPSVIDSLQLIFNVGAHGGMEQFRLGIDGISMATPLDTLKTDLSLGLTTTESMAKSIFDGGTGVGWFWVNLAYLAGGLVLLKLKAIRWHISTGVLAGLFVASSIGFLLSPDTQASPLFHLFSGATMLAAFFIATDPVTAATSPRGRLIFGALIGVLVYIIRTQGGYPDAFAFAVLLANLCAPFIDYYVRPRTYGHSAP</sequence>
<protein>
    <recommendedName>
        <fullName evidence="1">Ion-translocating oxidoreductase complex subunit D</fullName>
        <ecNumber evidence="1">7.-.-.-</ecNumber>
    </recommendedName>
    <alternativeName>
        <fullName evidence="1">Rnf electron transport complex subunit D</fullName>
    </alternativeName>
</protein>